<reference key="1">
    <citation type="submission" date="1996-02" db="EMBL/GenBank/DDBJ databases">
        <authorList>
            <person name="Wehmeier U.F."/>
            <person name="Brass N."/>
            <person name="Roessler C."/>
            <person name="Piepersberg W."/>
        </authorList>
    </citation>
    <scope>NUCLEOTIDE SEQUENCE [GENOMIC DNA]</scope>
    <source>
        <strain>ATCC 14077 / CBS 700.72 / DSM 40480 / NBRC 13399 / VKM Ac-160</strain>
    </source>
</reference>
<name>TYRO_STRGB</name>
<evidence type="ECO:0000250" key="1"/>
<evidence type="ECO:0000250" key="2">
    <source>
        <dbReference type="UniProtKB" id="Q9ZP19"/>
    </source>
</evidence>
<evidence type="ECO:0000305" key="3"/>
<dbReference type="EC" id="1.14.18.1"/>
<dbReference type="EMBL" id="X95705">
    <property type="protein sequence ID" value="CAA65005.1"/>
    <property type="molecule type" value="Genomic_DNA"/>
</dbReference>
<dbReference type="SMR" id="P55022"/>
<dbReference type="STRING" id="33898.GCA_000772895_01810"/>
<dbReference type="GO" id="GO:0046872">
    <property type="term" value="F:metal ion binding"/>
    <property type="evidence" value="ECO:0007669"/>
    <property type="project" value="UniProtKB-KW"/>
</dbReference>
<dbReference type="GO" id="GO:0004503">
    <property type="term" value="F:tyrosinase activity"/>
    <property type="evidence" value="ECO:0007669"/>
    <property type="project" value="UniProtKB-EC"/>
</dbReference>
<dbReference type="GO" id="GO:0042438">
    <property type="term" value="P:melanin biosynthetic process"/>
    <property type="evidence" value="ECO:0007669"/>
    <property type="project" value="UniProtKB-KW"/>
</dbReference>
<dbReference type="Gene3D" id="1.10.1280.10">
    <property type="entry name" value="Di-copper center containing domain from catechol oxidase"/>
    <property type="match status" value="1"/>
</dbReference>
<dbReference type="InterPro" id="IPR008922">
    <property type="entry name" value="Di-copper_centre_dom_sf"/>
</dbReference>
<dbReference type="InterPro" id="IPR050316">
    <property type="entry name" value="Tyrosinase/Hemocyanin"/>
</dbReference>
<dbReference type="InterPro" id="IPR002227">
    <property type="entry name" value="Tyrosinase_Cu-bd"/>
</dbReference>
<dbReference type="NCBIfam" id="NF047834">
    <property type="entry name" value="TyrosinaseMelC2"/>
    <property type="match status" value="1"/>
</dbReference>
<dbReference type="PANTHER" id="PTHR11474">
    <property type="entry name" value="TYROSINASE FAMILY MEMBER"/>
    <property type="match status" value="1"/>
</dbReference>
<dbReference type="PANTHER" id="PTHR11474:SF126">
    <property type="entry name" value="TYROSINASE-LIKE PROTEIN TYR-1-RELATED"/>
    <property type="match status" value="1"/>
</dbReference>
<dbReference type="Pfam" id="PF00264">
    <property type="entry name" value="Tyrosinase"/>
    <property type="match status" value="1"/>
</dbReference>
<dbReference type="PRINTS" id="PR00092">
    <property type="entry name" value="TYROSINASE"/>
</dbReference>
<dbReference type="SUPFAM" id="SSF48056">
    <property type="entry name" value="Di-copper centre-containing domain"/>
    <property type="match status" value="1"/>
</dbReference>
<dbReference type="PROSITE" id="PS00497">
    <property type="entry name" value="TYROSINASE_1"/>
    <property type="match status" value="1"/>
</dbReference>
<accession>P55022</accession>
<sequence length="276" mass="31310">MTVRKNQAALTADEKRRFVAAVLELKRNGRYDEFVRTHNEFIMSDTRTGRRGGPGHRLPLPFLPWHRRFLLDFEQALQSVDSSVALPYWDWSTDRTVRASLWAPDFLGGTGRSSDGRVMDGPFAASTGNWPVNVRVDGRTFLRRSLGTGVRELPTRAEVDSVLSMATYDMAPYNSASDGFRNHLEGWRGVNLHNRVHVWVGGQMATGVSPNDPVFWLHHAYNRQLWAEWQRRHPGAGYVPTGGTPDVVDLNDTMKPWNDVRPADLLTHTAHYTFDV</sequence>
<proteinExistence type="inferred from homology"/>
<gene>
    <name type="primary">melC2</name>
    <name type="synonym">mel</name>
</gene>
<feature type="initiator methionine" description="Removed" evidence="1">
    <location>
        <position position="1"/>
    </location>
</feature>
<feature type="chain" id="PRO_0000186736" description="Tyrosinase">
    <location>
        <begin position="2"/>
        <end position="276"/>
    </location>
</feature>
<feature type="binding site" evidence="2">
    <location>
        <position position="38"/>
    </location>
    <ligand>
        <name>Cu cation</name>
        <dbReference type="ChEBI" id="CHEBI:23378"/>
        <label>A</label>
    </ligand>
</feature>
<feature type="binding site" evidence="2">
    <location>
        <position position="56"/>
    </location>
    <ligand>
        <name>Cu cation</name>
        <dbReference type="ChEBI" id="CHEBI:23378"/>
        <label>A</label>
    </ligand>
</feature>
<feature type="binding site" evidence="2">
    <location>
        <position position="66"/>
    </location>
    <ligand>
        <name>Cu cation</name>
        <dbReference type="ChEBI" id="CHEBI:23378"/>
        <label>A</label>
    </ligand>
</feature>
<feature type="binding site" evidence="2">
    <location>
        <position position="193"/>
    </location>
    <ligand>
        <name>Cu cation</name>
        <dbReference type="ChEBI" id="CHEBI:23378"/>
        <label>B</label>
    </ligand>
</feature>
<feature type="binding site" evidence="2">
    <location>
        <position position="197"/>
    </location>
    <ligand>
        <name>Cu cation</name>
        <dbReference type="ChEBI" id="CHEBI:23378"/>
        <label>B</label>
    </ligand>
</feature>
<feature type="binding site" evidence="2">
    <location>
        <position position="219"/>
    </location>
    <ligand>
        <name>Cu cation</name>
        <dbReference type="ChEBI" id="CHEBI:23378"/>
        <label>B</label>
    </ligand>
</feature>
<comment type="function">
    <text>This is a copper-containing oxidase that functions in the formation of pigments such as melanins and other polyphenolic compounds.</text>
</comment>
<comment type="catalytic activity">
    <reaction>
        <text>2 L-dopa + O2 = 2 L-dopaquinone + 2 H2O</text>
        <dbReference type="Rhea" id="RHEA:34287"/>
        <dbReference type="ChEBI" id="CHEBI:15377"/>
        <dbReference type="ChEBI" id="CHEBI:15379"/>
        <dbReference type="ChEBI" id="CHEBI:57504"/>
        <dbReference type="ChEBI" id="CHEBI:57924"/>
        <dbReference type="EC" id="1.14.18.1"/>
    </reaction>
</comment>
<comment type="catalytic activity">
    <reaction>
        <text>L-tyrosine + O2 = L-dopaquinone + H2O</text>
        <dbReference type="Rhea" id="RHEA:18117"/>
        <dbReference type="ChEBI" id="CHEBI:15377"/>
        <dbReference type="ChEBI" id="CHEBI:15379"/>
        <dbReference type="ChEBI" id="CHEBI:57924"/>
        <dbReference type="ChEBI" id="CHEBI:58315"/>
        <dbReference type="EC" id="1.14.18.1"/>
    </reaction>
</comment>
<comment type="cofactor">
    <cofactor evidence="2">
        <name>Cu(2+)</name>
        <dbReference type="ChEBI" id="CHEBI:29036"/>
    </cofactor>
    <text evidence="2">Binds 2 copper ions per subunit.</text>
</comment>
<comment type="similarity">
    <text evidence="3">Belongs to the tyrosinase family.</text>
</comment>
<protein>
    <recommendedName>
        <fullName>Tyrosinase</fullName>
        <ecNumber>1.14.18.1</ecNumber>
    </recommendedName>
    <alternativeName>
        <fullName>Monophenol monooxygenase</fullName>
    </alternativeName>
</protein>
<organism>
    <name type="scientific">Streptomyces galbus</name>
    <dbReference type="NCBI Taxonomy" id="33898"/>
    <lineage>
        <taxon>Bacteria</taxon>
        <taxon>Bacillati</taxon>
        <taxon>Actinomycetota</taxon>
        <taxon>Actinomycetes</taxon>
        <taxon>Kitasatosporales</taxon>
        <taxon>Streptomycetaceae</taxon>
        <taxon>Streptomyces</taxon>
    </lineage>
</organism>
<keyword id="KW-0186">Copper</keyword>
<keyword id="KW-0470">Melanin biosynthesis</keyword>
<keyword id="KW-0479">Metal-binding</keyword>
<keyword id="KW-0503">Monooxygenase</keyword>
<keyword id="KW-0560">Oxidoreductase</keyword>